<accession>A6VTV5</accession>
<name>URED_MARMS</name>
<protein>
    <recommendedName>
        <fullName evidence="1">Urease accessory protein UreD</fullName>
    </recommendedName>
</protein>
<feature type="chain" id="PRO_0000340461" description="Urease accessory protein UreD">
    <location>
        <begin position="1"/>
        <end position="312"/>
    </location>
</feature>
<dbReference type="EMBL" id="CP000749">
    <property type="protein sequence ID" value="ABR69884.1"/>
    <property type="molecule type" value="Genomic_DNA"/>
</dbReference>
<dbReference type="SMR" id="A6VTV5"/>
<dbReference type="STRING" id="400668.Mmwyl1_0953"/>
<dbReference type="KEGG" id="mmw:Mmwyl1_0953"/>
<dbReference type="eggNOG" id="COG0829">
    <property type="taxonomic scope" value="Bacteria"/>
</dbReference>
<dbReference type="HOGENOM" id="CLU_056339_0_0_6"/>
<dbReference type="OrthoDB" id="9798842at2"/>
<dbReference type="GO" id="GO:0005737">
    <property type="term" value="C:cytoplasm"/>
    <property type="evidence" value="ECO:0007669"/>
    <property type="project" value="UniProtKB-SubCell"/>
</dbReference>
<dbReference type="GO" id="GO:0016151">
    <property type="term" value="F:nickel cation binding"/>
    <property type="evidence" value="ECO:0007669"/>
    <property type="project" value="UniProtKB-UniRule"/>
</dbReference>
<dbReference type="HAMAP" id="MF_01384">
    <property type="entry name" value="UreD"/>
    <property type="match status" value="1"/>
</dbReference>
<dbReference type="InterPro" id="IPR002669">
    <property type="entry name" value="UreD"/>
</dbReference>
<dbReference type="PANTHER" id="PTHR33643">
    <property type="entry name" value="UREASE ACCESSORY PROTEIN D"/>
    <property type="match status" value="1"/>
</dbReference>
<dbReference type="PANTHER" id="PTHR33643:SF1">
    <property type="entry name" value="UREASE ACCESSORY PROTEIN D"/>
    <property type="match status" value="1"/>
</dbReference>
<dbReference type="Pfam" id="PF01774">
    <property type="entry name" value="UreD"/>
    <property type="match status" value="1"/>
</dbReference>
<sequence>MNNKHNLALAEQYDQKPLIKTSMLPEVGASQWHAFLTLGFSKTARGTVLKTSDHKGPLYVQKPFYPEGRDTAHIYLLHPPGGLVSGDRLTITANLAENTHVLITTPGAGRVYRARKDKTLQHQITQLNVAENSLMEWLPQETILYPNAHTRLENRIHLANNAKFIGWEITCFGLPANQEDFAQGHAEQGFEIRQNGRLKVRERLVIDDSSRTIFAAKAGLAGKPINGLMIAGPFDLTNASHSASHDELIDSLRKHCAQHNSVSGVSLVGEYIFVRSLHHDSEQVKQLFIQCWREIRPALINKESNEPRIWAT</sequence>
<keyword id="KW-0143">Chaperone</keyword>
<keyword id="KW-0963">Cytoplasm</keyword>
<keyword id="KW-0996">Nickel insertion</keyword>
<gene>
    <name evidence="1" type="primary">ureD</name>
    <name type="ordered locus">Mmwyl1_0953</name>
</gene>
<proteinExistence type="inferred from homology"/>
<evidence type="ECO:0000255" key="1">
    <source>
        <dbReference type="HAMAP-Rule" id="MF_01384"/>
    </source>
</evidence>
<comment type="function">
    <text evidence="1">Required for maturation of urease via the functional incorporation of the urease nickel metallocenter.</text>
</comment>
<comment type="subunit">
    <text evidence="1">UreD, UreF and UreG form a complex that acts as a GTP-hydrolysis-dependent molecular chaperone, activating the urease apoprotein by helping to assemble the nickel containing metallocenter of UreC. The UreE protein probably delivers the nickel.</text>
</comment>
<comment type="subcellular location">
    <subcellularLocation>
        <location evidence="1">Cytoplasm</location>
    </subcellularLocation>
</comment>
<comment type="similarity">
    <text evidence="1">Belongs to the UreD family.</text>
</comment>
<reference key="1">
    <citation type="submission" date="2007-06" db="EMBL/GenBank/DDBJ databases">
        <title>Complete sequence of Marinomonas sp. MWYL1.</title>
        <authorList>
            <consortium name="US DOE Joint Genome Institute"/>
            <person name="Copeland A."/>
            <person name="Lucas S."/>
            <person name="Lapidus A."/>
            <person name="Barry K."/>
            <person name="Glavina del Rio T."/>
            <person name="Dalin E."/>
            <person name="Tice H."/>
            <person name="Pitluck S."/>
            <person name="Kiss H."/>
            <person name="Brettin T."/>
            <person name="Bruce D."/>
            <person name="Detter J.C."/>
            <person name="Han C."/>
            <person name="Schmutz J."/>
            <person name="Larimer F."/>
            <person name="Land M."/>
            <person name="Hauser L."/>
            <person name="Kyrpides N."/>
            <person name="Kim E."/>
            <person name="Johnston A.W.B."/>
            <person name="Todd J.D."/>
            <person name="Rogers R."/>
            <person name="Wexler M."/>
            <person name="Bond P.L."/>
            <person name="Li Y."/>
            <person name="Richardson P."/>
        </authorList>
    </citation>
    <scope>NUCLEOTIDE SEQUENCE [LARGE SCALE GENOMIC DNA]</scope>
    <source>
        <strain>MWYL1</strain>
    </source>
</reference>
<organism>
    <name type="scientific">Marinomonas sp. (strain MWYL1)</name>
    <dbReference type="NCBI Taxonomy" id="400668"/>
    <lineage>
        <taxon>Bacteria</taxon>
        <taxon>Pseudomonadati</taxon>
        <taxon>Pseudomonadota</taxon>
        <taxon>Gammaproteobacteria</taxon>
        <taxon>Oceanospirillales</taxon>
        <taxon>Oceanospirillaceae</taxon>
        <taxon>Marinomonas</taxon>
    </lineage>
</organism>